<accession>P0DN86</accession>
<accession>A1A5E0</accession>
<accession>B9ZVP5</accession>
<accession>P01233</accession>
<accession>Q13991</accession>
<accession>Q14000</accession>
<accession>Q3KPI3</accession>
<accession>Q3SY41</accession>
<accession>Q8WTT5</accession>
<accession>Q8WXL1</accession>
<accession>Q8WXL2</accession>
<accession>Q8WXL3</accession>
<accession>Q8WXL4</accession>
<evidence type="ECO:0000256" key="1">
    <source>
        <dbReference type="SAM" id="MobiDB-lite"/>
    </source>
</evidence>
<evidence type="ECO:0000269" key="2">
    <source>
    </source>
</evidence>
<evidence type="ECO:0000269" key="3">
    <source>
    </source>
</evidence>
<evidence type="ECO:0000269" key="4">
    <source>
    </source>
</evidence>
<evidence type="ECO:0000269" key="5">
    <source>
    </source>
</evidence>
<evidence type="ECO:0000269" key="6">
    <source>
    </source>
</evidence>
<evidence type="ECO:0000269" key="7">
    <source>
    </source>
</evidence>
<evidence type="ECO:0000269" key="8">
    <source>
    </source>
</evidence>
<evidence type="ECO:0000269" key="9">
    <source>
    </source>
</evidence>
<evidence type="ECO:0000269" key="10">
    <source>
    </source>
</evidence>
<evidence type="ECO:0000305" key="11"/>
<evidence type="ECO:0007744" key="12">
    <source>
        <dbReference type="PDB" id="1HRP"/>
    </source>
</evidence>
<evidence type="ECO:0007829" key="13">
    <source>
        <dbReference type="PDB" id="1HCN"/>
    </source>
</evidence>
<evidence type="ECO:0007829" key="14">
    <source>
        <dbReference type="PDB" id="7FIH"/>
    </source>
</evidence>
<sequence>MEMFQGLLLLLLLSMGGTWASKEPLRPRCRPINATLAVEKEGCPVCITVNTTICAGYCPTMTRVLQGVLPALPQVVCNYRDVRFESIRLPGCPRGVNPVVSYAVALSCQCALCRRSTTDCGGPKDHPLTCDDPRFQDSSSSKAPPPSLPSPSRLPGPSDTPILPQ</sequence>
<protein>
    <recommendedName>
        <fullName>Choriogonadotropin subunit beta 3</fullName>
    </recommendedName>
    <alternativeName>
        <fullName>Choriogonadotropin subunit beta</fullName>
        <shortName>CG-beta</shortName>
    </alternativeName>
    <alternativeName>
        <fullName>Chorionic gonadotropin chain beta</fullName>
    </alternativeName>
</protein>
<dbReference type="EMBL" id="J00117">
    <property type="protein sequence ID" value="AAA96690.1"/>
    <property type="molecule type" value="mRNA"/>
</dbReference>
<dbReference type="EMBL" id="X00265">
    <property type="protein sequence ID" value="CAA25068.1"/>
    <property type="status" value="ALT_INIT"/>
    <property type="molecule type" value="Genomic_DNA"/>
</dbReference>
<dbReference type="EMBL" id="X00266">
    <property type="protein sequence ID" value="CAA25069.1"/>
    <property type="status" value="ALT_INIT"/>
    <property type="molecule type" value="Genomic_DNA"/>
</dbReference>
<dbReference type="EMBL" id="K03189">
    <property type="protein sequence ID" value="AAA53288.1"/>
    <property type="molecule type" value="Genomic_DNA"/>
</dbReference>
<dbReference type="EMBL" id="K03187">
    <property type="protein sequence ID" value="AAA53288.1"/>
    <property type="status" value="JOINED"/>
    <property type="molecule type" value="Genomic_DNA"/>
</dbReference>
<dbReference type="EMBL" id="K03188">
    <property type="protein sequence ID" value="AAA53288.1"/>
    <property type="status" value="JOINED"/>
    <property type="molecule type" value="Genomic_DNA"/>
</dbReference>
<dbReference type="EMBL" id="K03183">
    <property type="protein sequence ID" value="AAA53287.1"/>
    <property type="molecule type" value="Genomic_DNA"/>
</dbReference>
<dbReference type="EMBL" id="K00092">
    <property type="protein sequence ID" value="AAA53287.1"/>
    <property type="status" value="JOINED"/>
    <property type="molecule type" value="Genomic_DNA"/>
</dbReference>
<dbReference type="EMBL" id="K03182">
    <property type="protein sequence ID" value="AAA53287.1"/>
    <property type="status" value="JOINED"/>
    <property type="molecule type" value="Genomic_DNA"/>
</dbReference>
<dbReference type="EMBL" id="BT006890">
    <property type="protein sequence ID" value="AAP35536.1"/>
    <property type="molecule type" value="mRNA"/>
</dbReference>
<dbReference type="EMBL" id="AK291552">
    <property type="protein sequence ID" value="BAF84241.1"/>
    <property type="molecule type" value="mRNA"/>
</dbReference>
<dbReference type="EMBL" id="AC008687">
    <property type="status" value="NOT_ANNOTATED_CDS"/>
    <property type="molecule type" value="Genomic_DNA"/>
</dbReference>
<dbReference type="EMBL" id="CH471177">
    <property type="protein sequence ID" value="EAW52434.1"/>
    <property type="molecule type" value="Genomic_DNA"/>
</dbReference>
<dbReference type="EMBL" id="CH471177">
    <property type="protein sequence ID" value="EAW52437.1"/>
    <property type="molecule type" value="Genomic_DNA"/>
</dbReference>
<dbReference type="EMBL" id="CH471177">
    <property type="protein sequence ID" value="EAW52438.1"/>
    <property type="molecule type" value="Genomic_DNA"/>
</dbReference>
<dbReference type="EMBL" id="BC006290">
    <property type="protein sequence ID" value="AAH06290.1"/>
    <property type="molecule type" value="mRNA"/>
</dbReference>
<dbReference type="EMBL" id="BC022796">
    <property type="protein sequence ID" value="AAH22796.1"/>
    <property type="molecule type" value="mRNA"/>
</dbReference>
<dbReference type="EMBL" id="BC030994">
    <property type="protein sequence ID" value="AAH30994.1"/>
    <property type="molecule type" value="mRNA"/>
</dbReference>
<dbReference type="EMBL" id="BC041054">
    <property type="protein sequence ID" value="AAH41054.1"/>
    <property type="molecule type" value="mRNA"/>
</dbReference>
<dbReference type="EMBL" id="BC051378">
    <property type="protein sequence ID" value="AAH51378.1"/>
    <property type="molecule type" value="mRNA"/>
</dbReference>
<dbReference type="EMBL" id="BC069526">
    <property type="protein sequence ID" value="AAH69526.1"/>
    <property type="molecule type" value="mRNA"/>
</dbReference>
<dbReference type="EMBL" id="BC103969">
    <property type="protein sequence ID" value="AAI03970.1"/>
    <property type="molecule type" value="mRNA"/>
</dbReference>
<dbReference type="EMBL" id="BC103970">
    <property type="protein sequence ID" value="AAI03971.1"/>
    <property type="molecule type" value="mRNA"/>
</dbReference>
<dbReference type="EMBL" id="BC103971">
    <property type="protein sequence ID" value="AAI03972.1"/>
    <property type="molecule type" value="mRNA"/>
</dbReference>
<dbReference type="EMBL" id="BC106059">
    <property type="protein sequence ID" value="AAI06060.1"/>
    <property type="molecule type" value="mRNA"/>
</dbReference>
<dbReference type="EMBL" id="BC106723">
    <property type="protein sequence ID" value="AAI06724.1"/>
    <property type="molecule type" value="mRNA"/>
</dbReference>
<dbReference type="EMBL" id="BC106724">
    <property type="protein sequence ID" value="AAI06725.1"/>
    <property type="molecule type" value="mRNA"/>
</dbReference>
<dbReference type="EMBL" id="BC128603">
    <property type="protein sequence ID" value="AAI28604.1"/>
    <property type="molecule type" value="mRNA"/>
</dbReference>
<dbReference type="EMBL" id="M13503">
    <property type="protein sequence ID" value="AAA52009.1"/>
    <property type="molecule type" value="Genomic_DNA"/>
</dbReference>
<dbReference type="EMBL" id="M13504">
    <property type="protein sequence ID" value="AAA52005.1"/>
    <property type="molecule type" value="Genomic_DNA"/>
</dbReference>
<dbReference type="EMBL" id="M13505">
    <property type="protein sequence ID" value="AAA52008.1"/>
    <property type="molecule type" value="Genomic_DNA"/>
</dbReference>
<dbReference type="EMBL" id="AF397576">
    <property type="protein sequence ID" value="AAL69704.1"/>
    <property type="molecule type" value="Genomic_DNA"/>
</dbReference>
<dbReference type="EMBL" id="AF397577">
    <property type="protein sequence ID" value="AAL69705.1"/>
    <property type="molecule type" value="Genomic_DNA"/>
</dbReference>
<dbReference type="EMBL" id="AF397578">
    <property type="protein sequence ID" value="AAL69706.1"/>
    <property type="molecule type" value="Genomic_DNA"/>
</dbReference>
<dbReference type="EMBL" id="AF397579">
    <property type="protein sequence ID" value="AAL69707.1"/>
    <property type="molecule type" value="Genomic_DNA"/>
</dbReference>
<dbReference type="EMBL" id="AF397580">
    <property type="protein sequence ID" value="AAL69708.1"/>
    <property type="molecule type" value="Genomic_DNA"/>
</dbReference>
<dbReference type="EMBL" id="AF397581">
    <property type="protein sequence ID" value="AAL69709.1"/>
    <property type="molecule type" value="Genomic_DNA"/>
</dbReference>
<dbReference type="CCDS" id="CCDS12749.1">
    <molecule id="P0DN86-1"/>
</dbReference>
<dbReference type="PIR" id="A93230">
    <property type="entry name" value="KTHUB"/>
</dbReference>
<dbReference type="PIR" id="I37231">
    <property type="entry name" value="I37231"/>
</dbReference>
<dbReference type="RefSeq" id="NP_000728.1">
    <molecule id="P0DN86-1"/>
    <property type="nucleotide sequence ID" value="NM_000737.5"/>
</dbReference>
<dbReference type="RefSeq" id="NP_149032.1">
    <molecule id="P0DN86-1"/>
    <property type="nucleotide sequence ID" value="NM_033043.1"/>
</dbReference>
<dbReference type="RefSeq" id="NP_149439.1">
    <molecule id="P0DN86-1"/>
    <property type="nucleotide sequence ID" value="NM_033183.2"/>
</dbReference>
<dbReference type="PDB" id="1HCN">
    <property type="method" value="X-ray"/>
    <property type="resolution" value="2.60 A"/>
    <property type="chains" value="B=21-165"/>
</dbReference>
<dbReference type="PDB" id="1HRP">
    <property type="method" value="X-ray"/>
    <property type="resolution" value="3.00 A"/>
    <property type="chains" value="B=21-165"/>
</dbReference>
<dbReference type="PDB" id="1QFW">
    <property type="method" value="X-ray"/>
    <property type="resolution" value="3.50 A"/>
    <property type="chains" value="B=21-165"/>
</dbReference>
<dbReference type="PDB" id="7FIG">
    <property type="method" value="EM"/>
    <property type="resolution" value="3.90 A"/>
    <property type="chains" value="Y=1-165"/>
</dbReference>
<dbReference type="PDB" id="7FIH">
    <property type="method" value="EM"/>
    <property type="resolution" value="3.20 A"/>
    <property type="chains" value="Y=1-165"/>
</dbReference>
<dbReference type="PDB" id="7FII">
    <property type="method" value="EM"/>
    <property type="resolution" value="4.30 A"/>
    <property type="chains" value="Y=1-165"/>
</dbReference>
<dbReference type="PDBsum" id="1HCN"/>
<dbReference type="PDBsum" id="1HRP"/>
<dbReference type="PDBsum" id="1QFW"/>
<dbReference type="PDBsum" id="7FIG"/>
<dbReference type="PDBsum" id="7FIH"/>
<dbReference type="PDBsum" id="7FII"/>
<dbReference type="EMDB" id="EMD-31596"/>
<dbReference type="EMDB" id="EMD-31597"/>
<dbReference type="EMDB" id="EMD-31598"/>
<dbReference type="SMR" id="P0DN86"/>
<dbReference type="ComplexPortal" id="CPX-748">
    <property type="entry name" value="Chorionic gonadotropin hormone complex"/>
</dbReference>
<dbReference type="FunCoup" id="P0DN86">
    <property type="interactions" value="49"/>
</dbReference>
<dbReference type="IntAct" id="P0DN86">
    <property type="interactions" value="12"/>
</dbReference>
<dbReference type="MINT" id="P0DN86"/>
<dbReference type="STRING" id="9606.ENSP00000301408"/>
<dbReference type="GlyConnect" id="88">
    <property type="glycosylation" value="12 N-Linked glycans, 9 O-Linked glycans"/>
</dbReference>
<dbReference type="GlyConnect" id="91">
    <property type="glycosylation" value="9 N-Linked glycans (2 sites), 6 O-Linked glycans"/>
</dbReference>
<dbReference type="GlyCosmos" id="P0DN86">
    <property type="glycosylation" value="6 sites, 43 glycans"/>
</dbReference>
<dbReference type="GlyGen" id="P0DN86">
    <property type="glycosylation" value="9 sites, 28 N-linked glycans (3 sites), 15 O-linked glycans (5 sites)"/>
</dbReference>
<dbReference type="iPTMnet" id="P0DN86"/>
<dbReference type="PhosphoSitePlus" id="P0DN86"/>
<dbReference type="BioMuta" id="CGB5"/>
<dbReference type="jPOST" id="P0DN86"/>
<dbReference type="MassIVE" id="P0DN86"/>
<dbReference type="PaxDb" id="9606-ENSP00000301408"/>
<dbReference type="PeptideAtlas" id="P0DN86"/>
<dbReference type="ABCD" id="P0DN86">
    <property type="antibodies" value="6 sequenced antibodies"/>
</dbReference>
<dbReference type="Antibodypedia" id="4392">
    <property type="antibodies" value="2184 antibodies from 39 providers"/>
</dbReference>
<dbReference type="Antibodypedia" id="74544">
    <property type="antibodies" value="113 antibodies from 12 providers"/>
</dbReference>
<dbReference type="Antibodypedia" id="76402">
    <property type="antibodies" value="28 antibodies from 4 providers"/>
</dbReference>
<dbReference type="CPTC" id="P0DN86">
    <property type="antibodies" value="10 antibodies"/>
</dbReference>
<dbReference type="DNASU" id="1082"/>
<dbReference type="Ensembl" id="ENST00000301408.7">
    <molecule id="P0DN86-1"/>
    <property type="protein sequence ID" value="ENSP00000301408.5"/>
    <property type="gene ID" value="ENSG00000189052.7"/>
</dbReference>
<dbReference type="Ensembl" id="ENST00000357383.4">
    <molecule id="P0DN86-1"/>
    <property type="protein sequence ID" value="ENSP00000349954.2"/>
    <property type="gene ID" value="ENSG00000104827.12"/>
</dbReference>
<dbReference type="Ensembl" id="ENST00000448456.4">
    <molecule id="P0DN86-1"/>
    <property type="protein sequence ID" value="ENSP00000403649.2"/>
    <property type="gene ID" value="ENSG00000213030.6"/>
</dbReference>
<dbReference type="GeneID" id="1082"/>
<dbReference type="GeneID" id="93659"/>
<dbReference type="GeneID" id="94115"/>
<dbReference type="KEGG" id="hsa:1082"/>
<dbReference type="KEGG" id="hsa:93659"/>
<dbReference type="KEGG" id="hsa:94115"/>
<dbReference type="MANE-Select" id="ENST00000301408.7">
    <property type="protein sequence ID" value="ENSP00000301408.5"/>
    <property type="RefSeq nucleotide sequence ID" value="NM_033043.2"/>
    <property type="RefSeq protein sequence ID" value="NP_149032.1"/>
</dbReference>
<dbReference type="MANE-Select" id="ENST00000357383.4">
    <property type="protein sequence ID" value="ENSP00000349954.2"/>
    <property type="RefSeq nucleotide sequence ID" value="NM_000737.5"/>
    <property type="RefSeq protein sequence ID" value="NP_000728.1"/>
</dbReference>
<dbReference type="MANE-Select" id="ENST00000448456.4">
    <property type="protein sequence ID" value="ENSP00000403649.2"/>
    <property type="RefSeq nucleotide sequence ID" value="NM_033183.3"/>
    <property type="RefSeq protein sequence ID" value="NP_149439.1"/>
</dbReference>
<dbReference type="AGR" id="HGNC:16452"/>
<dbReference type="AGR" id="HGNC:16453"/>
<dbReference type="AGR" id="HGNC:1886"/>
<dbReference type="CTD" id="1082"/>
<dbReference type="CTD" id="93659"/>
<dbReference type="CTD" id="94115"/>
<dbReference type="DisGeNET" id="1082"/>
<dbReference type="DisGeNET" id="93659"/>
<dbReference type="DisGeNET" id="94115"/>
<dbReference type="GeneCards" id="CGB3"/>
<dbReference type="GeneCards" id="CGB5"/>
<dbReference type="GeneCards" id="CGB8"/>
<dbReference type="HGNC" id="HGNC:1886">
    <property type="gene designation" value="CGB3"/>
</dbReference>
<dbReference type="HGNC" id="HGNC:16452">
    <property type="gene designation" value="CGB5"/>
</dbReference>
<dbReference type="HGNC" id="HGNC:16453">
    <property type="gene designation" value="CGB8"/>
</dbReference>
<dbReference type="HPA" id="ENSG00000104827">
    <property type="expression patterns" value="Tissue enriched (placenta)"/>
</dbReference>
<dbReference type="HPA" id="ENSG00000189052">
    <property type="expression patterns" value="Group enriched (pituitary gland, placenta)"/>
</dbReference>
<dbReference type="HPA" id="ENSG00000213030">
    <property type="expression patterns" value="Tissue enriched (placenta)"/>
</dbReference>
<dbReference type="MIM" id="118860">
    <property type="type" value="gene"/>
</dbReference>
<dbReference type="MIM" id="608825">
    <property type="type" value="gene"/>
</dbReference>
<dbReference type="MIM" id="608827">
    <property type="type" value="gene"/>
</dbReference>
<dbReference type="neXtProt" id="NX_P0DN86"/>
<dbReference type="OpenTargets" id="ENSG00000189052"/>
<dbReference type="OpenTargets" id="ENSG00000213030"/>
<dbReference type="VEuPathDB" id="HostDB:ENSG00000104827"/>
<dbReference type="VEuPathDB" id="HostDB:ENSG00000189052"/>
<dbReference type="VEuPathDB" id="HostDB:ENSG00000213030"/>
<dbReference type="GeneTree" id="ENSGT00940000163162"/>
<dbReference type="InParanoid" id="P0DN86"/>
<dbReference type="OMA" id="MGRTWAS"/>
<dbReference type="OrthoDB" id="9525526at2759"/>
<dbReference type="PAN-GO" id="P0DN86">
    <property type="GO annotations" value="3 GO annotations based on evolutionary models"/>
</dbReference>
<dbReference type="PhylomeDB" id="P0DN86"/>
<dbReference type="PathwayCommons" id="P0DN86"/>
<dbReference type="Reactome" id="R-HSA-209822">
    <property type="pathway name" value="Glycoprotein hormones"/>
</dbReference>
<dbReference type="Reactome" id="R-HSA-8866910">
    <property type="pathway name" value="TFAP2 (AP-2) family regulates transcription of growth factors and their receptors"/>
</dbReference>
<dbReference type="SignaLink" id="P0DN86"/>
<dbReference type="BioGRID-ORCS" id="1082">
    <property type="hits" value="25 hits in 222 CRISPR screens"/>
</dbReference>
<dbReference type="BioGRID-ORCS" id="93659">
    <property type="hits" value="29 hits in 598 CRISPR screens"/>
</dbReference>
<dbReference type="BioGRID-ORCS" id="94115">
    <property type="hits" value="21 hits in 244 CRISPR screens"/>
</dbReference>
<dbReference type="ChiTaRS" id="CGB8">
    <property type="organism name" value="human"/>
</dbReference>
<dbReference type="EvolutionaryTrace" id="P0DN86"/>
<dbReference type="Pharos" id="P0DN86">
    <property type="development level" value="Tbio"/>
</dbReference>
<dbReference type="PRO" id="PR:P0DN86"/>
<dbReference type="Proteomes" id="UP000005640">
    <property type="component" value="Chromosome 19"/>
</dbReference>
<dbReference type="RNAct" id="P0DN86">
    <property type="molecule type" value="protein"/>
</dbReference>
<dbReference type="Bgee" id="ENSG00000104827">
    <property type="expression patterns" value="Expressed in placenta and 48 other cell types or tissues"/>
</dbReference>
<dbReference type="ExpressionAtlas" id="P0DN86">
    <property type="expression patterns" value="baseline and differential"/>
</dbReference>
<dbReference type="GO" id="GO:0005737">
    <property type="term" value="C:cytoplasm"/>
    <property type="evidence" value="ECO:0000318"/>
    <property type="project" value="GO_Central"/>
</dbReference>
<dbReference type="GO" id="GO:0005576">
    <property type="term" value="C:extracellular region"/>
    <property type="evidence" value="ECO:0000304"/>
    <property type="project" value="Reactome"/>
</dbReference>
<dbReference type="GO" id="GO:0005615">
    <property type="term" value="C:extracellular space"/>
    <property type="evidence" value="ECO:0000318"/>
    <property type="project" value="GO_Central"/>
</dbReference>
<dbReference type="GO" id="GO:0061696">
    <property type="term" value="C:pituitary gonadotropin complex"/>
    <property type="evidence" value="ECO:0000353"/>
    <property type="project" value="ComplexPortal"/>
</dbReference>
<dbReference type="GO" id="GO:0005179">
    <property type="term" value="F:hormone activity"/>
    <property type="evidence" value="ECO:0000304"/>
    <property type="project" value="ProtInc"/>
</dbReference>
<dbReference type="GO" id="GO:0006915">
    <property type="term" value="P:apoptotic process"/>
    <property type="evidence" value="ECO:0000304"/>
    <property type="project" value="ProtInc"/>
</dbReference>
<dbReference type="GO" id="GO:0007267">
    <property type="term" value="P:cell-cell signaling"/>
    <property type="evidence" value="ECO:0000304"/>
    <property type="project" value="ProtInc"/>
</dbReference>
<dbReference type="GO" id="GO:0007292">
    <property type="term" value="P:female gamete generation"/>
    <property type="evidence" value="ECO:0000304"/>
    <property type="project" value="ProtInc"/>
</dbReference>
<dbReference type="GO" id="GO:0007186">
    <property type="term" value="P:G protein-coupled receptor signaling pathway"/>
    <property type="evidence" value="ECO:0000318"/>
    <property type="project" value="GO_Central"/>
</dbReference>
<dbReference type="GO" id="GO:0009755">
    <property type="term" value="P:hormone-mediated signaling pathway"/>
    <property type="evidence" value="ECO:0000303"/>
    <property type="project" value="ComplexPortal"/>
</dbReference>
<dbReference type="GO" id="GO:0007165">
    <property type="term" value="P:signal transduction"/>
    <property type="evidence" value="ECO:0000304"/>
    <property type="project" value="ProtInc"/>
</dbReference>
<dbReference type="CDD" id="cd00069">
    <property type="entry name" value="GHB_like"/>
    <property type="match status" value="1"/>
</dbReference>
<dbReference type="DisProt" id="DP00013"/>
<dbReference type="FunFam" id="2.10.90.10:FF:000007">
    <property type="entry name" value="Luteinizing hormone beta subunit"/>
    <property type="match status" value="1"/>
</dbReference>
<dbReference type="Gene3D" id="2.10.90.10">
    <property type="entry name" value="Cystine-knot cytokines"/>
    <property type="match status" value="1"/>
</dbReference>
<dbReference type="InterPro" id="IPR029034">
    <property type="entry name" value="Cystine-knot_cytokine"/>
</dbReference>
<dbReference type="InterPro" id="IPR006208">
    <property type="entry name" value="Glyco_hormone_CN"/>
</dbReference>
<dbReference type="InterPro" id="IPR001545">
    <property type="entry name" value="Gonadotropin_bsu"/>
</dbReference>
<dbReference type="InterPro" id="IPR018245">
    <property type="entry name" value="Gonadotropin_bsu_CS"/>
</dbReference>
<dbReference type="PANTHER" id="PTHR11515:SF25">
    <property type="entry name" value="CHORIOGONADOTROPIN SUBUNIT BETA 3-RELATED"/>
    <property type="match status" value="1"/>
</dbReference>
<dbReference type="PANTHER" id="PTHR11515">
    <property type="entry name" value="GLYCOPROTEIN HORMONE BETA CHAIN"/>
    <property type="match status" value="1"/>
</dbReference>
<dbReference type="Pfam" id="PF00007">
    <property type="entry name" value="Cys_knot"/>
    <property type="match status" value="1"/>
</dbReference>
<dbReference type="SMART" id="SM00068">
    <property type="entry name" value="GHB"/>
    <property type="match status" value="1"/>
</dbReference>
<dbReference type="SUPFAM" id="SSF57501">
    <property type="entry name" value="Cystine-knot cytokines"/>
    <property type="match status" value="1"/>
</dbReference>
<dbReference type="PROSITE" id="PS00261">
    <property type="entry name" value="GLYCO_HORMONE_BETA_1"/>
    <property type="match status" value="1"/>
</dbReference>
<dbReference type="PROSITE" id="PS00689">
    <property type="entry name" value="GLYCO_HORMONE_BETA_2"/>
    <property type="match status" value="1"/>
</dbReference>
<gene>
    <name type="primary">CGB3</name>
    <name type="synonym">CGB</name>
</gene>
<gene>
    <name type="primary">CGB5</name>
</gene>
<gene>
    <name type="primary">CGB8</name>
</gene>
<comment type="function">
    <text evidence="11">Beta subunit of the human chorionic gonadotropin (hCG). hCG is a complex glycoprotein composed of two glycosylated subunits alpha and beta which are non-covalently associated. The alpha subunit is identical to those in the pituitary gonadotropin hormones (LH, FSH and TSH). The beta subunits are distinct in each of the hormones and confer receptor and biological specificity. Has an essential role in pregnancy and maternal adaptation. Stimulates the ovaries to synthesize the steroids that are essential for the maintenance of pregnancy.</text>
</comment>
<comment type="subunit">
    <text evidence="10 11">Heterodimer of a common alpha chain identical in LH, FSH, TSH and HCG and a unique beta chain distinct in each of the hormones.</text>
</comment>
<comment type="interaction">
    <interactant intactId="EBI-8626304">
        <id>P0DN86</id>
    </interactant>
    <interactant intactId="EBI-718913">
        <id>P01215</id>
        <label>CGA</label>
    </interactant>
    <organismsDiffer>false</organismsDiffer>
    <experiments>2</experiments>
</comment>
<comment type="interaction">
    <interactant intactId="EBI-8626304">
        <id>P0DN86</id>
    </interactant>
    <interactant intactId="EBI-750494">
        <id>P49901</id>
        <label>SMCP</label>
    </interactant>
    <organismsDiffer>false</organismsDiffer>
    <experiments>3</experiments>
</comment>
<comment type="subcellular location">
    <subcellularLocation>
        <location evidence="5">Secreted</location>
    </subcellularLocation>
</comment>
<comment type="alternative products">
    <event type="alternative splicing"/>
    <isoform>
        <id>P0DN86-1</id>
        <name>1</name>
        <sequence type="displayed"/>
    </isoform>
    <isoform>
        <id>P0DN86-2</id>
        <name>2</name>
        <sequence type="described" ref="VSP_038396"/>
    </isoform>
</comment>
<comment type="tissue specificity">
    <text evidence="5">High expression in the placenta throughout pregnancy.</text>
</comment>
<comment type="developmental stage">
    <text evidence="5">Expressed continuously during the whole pregnancy with a peak during the first trimester.</text>
</comment>
<comment type="pharmaceutical">
    <text>Available under the names Novarel (Ferring) and Profasi (Serono). Used as adjunctive therapy in the treatment of obesity. There is no substantial evidence that it increases weight loss beyond that resulting from caloric restriction, that it causes a more attractive or 'normal' distribution of fat, or that it decreases the hunger and discomfort associated with calorie-restricted diets.</text>
</comment>
<comment type="miscellaneous">
    <text evidence="3">Encoded by a cluster of genes that have evolved by duplication from LHB. HCG-beta is encoded by six non-allelic genes (CGB) clustered on chromosome 19q13.3 and named CGB1, CGB2, CGB3, CGB5, CGB7 and CGB8. Two specific hCGb proteins that differ by three amino acids in positions 2,4 and 117 have been described: type 1 (CGB7) and type 2 (CGB3, CGB5, CGB8). The CGB gene first arose in the common ancestor of the anthropoid primates.</text>
</comment>
<comment type="similarity">
    <text evidence="11">Belongs to the glycoprotein hormones subunit beta family.</text>
</comment>
<comment type="sequence caution" evidence="11">
    <conflict type="erroneous initiation">
        <sequence resource="EMBL-CDS" id="CAA25068"/>
    </conflict>
</comment>
<comment type="sequence caution" evidence="11">
    <conflict type="erroneous initiation">
        <sequence resource="EMBL-CDS" id="CAA25069"/>
    </conflict>
</comment>
<comment type="online information" name="Wikipedia">
    <link uri="https://en.wikipedia.org/wiki/Human_chorionic_gonadotropin"/>
    <text>Chorionic gonadotropin entry</text>
</comment>
<name>CGB3_HUMAN</name>
<organism>
    <name type="scientific">Homo sapiens</name>
    <name type="common">Human</name>
    <dbReference type="NCBI Taxonomy" id="9606"/>
    <lineage>
        <taxon>Eukaryota</taxon>
        <taxon>Metazoa</taxon>
        <taxon>Chordata</taxon>
        <taxon>Craniata</taxon>
        <taxon>Vertebrata</taxon>
        <taxon>Euteleostomi</taxon>
        <taxon>Mammalia</taxon>
        <taxon>Eutheria</taxon>
        <taxon>Euarchontoglires</taxon>
        <taxon>Primates</taxon>
        <taxon>Haplorrhini</taxon>
        <taxon>Catarrhini</taxon>
        <taxon>Hominidae</taxon>
        <taxon>Homo</taxon>
    </lineage>
</organism>
<reference key="1">
    <citation type="journal article" date="1980" name="Nature">
        <title>The cDNA for the beta-subunit of human chorionic gonadotropin suggests evolution of a gene by readthrough into the 3'-untranslated region.</title>
        <authorList>
            <person name="Fiddes J.C."/>
            <person name="Goodman H.M."/>
        </authorList>
    </citation>
    <scope>NUCLEOTIDE SEQUENCE [MRNA] (ISOFORM 1)</scope>
</reference>
<reference key="2">
    <citation type="journal article" date="1984" name="Nature">
        <title>Evolution of the genes for the beta subunits of human chorionic gonadotropin and luteinizing hormone.</title>
        <authorList>
            <person name="Talmadge K."/>
            <person name="Vamvakopoulos N.C."/>
            <person name="Fiddes J.C."/>
        </authorList>
    </citation>
    <scope>NUCLEOTIDE SEQUENCE [GENOMIC DNA]</scope>
    <scope>VARIANT ALA-137</scope>
</reference>
<reference key="3">
    <citation type="journal article" date="1983" name="J. Biol. Chem.">
        <title>The beta subunit of human chorionic gonadotropin is encoded by multiple genes.</title>
        <authorList>
            <person name="Policastro P."/>
            <person name="Ovitt C.E."/>
            <person name="Hoshina M."/>
            <person name="Fukuoka H."/>
            <person name="Boothby M.R."/>
            <person name="Boime I."/>
        </authorList>
    </citation>
    <scope>NUCLEOTIDE SEQUENCE [GENOMIC DNA]</scope>
    <scope>VARIANTS MET-24 AND ALA-137</scope>
</reference>
<reference key="4">
    <citation type="submission" date="2003-05" db="EMBL/GenBank/DDBJ databases">
        <title>Cloning of human full-length CDSs in BD Creator(TM) system donor vector.</title>
        <authorList>
            <person name="Kalnine N."/>
            <person name="Chen X."/>
            <person name="Rolfs A."/>
            <person name="Halleck A."/>
            <person name="Hines L."/>
            <person name="Eisenstein S."/>
            <person name="Koundinya M."/>
            <person name="Raphael J."/>
            <person name="Moreira D."/>
            <person name="Kelley T."/>
            <person name="LaBaer J."/>
            <person name="Lin Y."/>
            <person name="Phelan M."/>
            <person name="Farmer A."/>
        </authorList>
    </citation>
    <scope>NUCLEOTIDE SEQUENCE [LARGE SCALE MRNA] (ISOFORM 1)</scope>
</reference>
<reference key="5">
    <citation type="journal article" date="2004" name="Nat. Genet.">
        <title>Complete sequencing and characterization of 21,243 full-length human cDNAs.</title>
        <authorList>
            <person name="Ota T."/>
            <person name="Suzuki Y."/>
            <person name="Nishikawa T."/>
            <person name="Otsuki T."/>
            <person name="Sugiyama T."/>
            <person name="Irie R."/>
            <person name="Wakamatsu A."/>
            <person name="Hayashi K."/>
            <person name="Sato H."/>
            <person name="Nagai K."/>
            <person name="Kimura K."/>
            <person name="Makita H."/>
            <person name="Sekine M."/>
            <person name="Obayashi M."/>
            <person name="Nishi T."/>
            <person name="Shibahara T."/>
            <person name="Tanaka T."/>
            <person name="Ishii S."/>
            <person name="Yamamoto J."/>
            <person name="Saito K."/>
            <person name="Kawai Y."/>
            <person name="Isono Y."/>
            <person name="Nakamura Y."/>
            <person name="Nagahari K."/>
            <person name="Murakami K."/>
            <person name="Yasuda T."/>
            <person name="Iwayanagi T."/>
            <person name="Wagatsuma M."/>
            <person name="Shiratori A."/>
            <person name="Sudo H."/>
            <person name="Hosoiri T."/>
            <person name="Kaku Y."/>
            <person name="Kodaira H."/>
            <person name="Kondo H."/>
            <person name="Sugawara M."/>
            <person name="Takahashi M."/>
            <person name="Kanda K."/>
            <person name="Yokoi T."/>
            <person name="Furuya T."/>
            <person name="Kikkawa E."/>
            <person name="Omura Y."/>
            <person name="Abe K."/>
            <person name="Kamihara K."/>
            <person name="Katsuta N."/>
            <person name="Sato K."/>
            <person name="Tanikawa M."/>
            <person name="Yamazaki M."/>
            <person name="Ninomiya K."/>
            <person name="Ishibashi T."/>
            <person name="Yamashita H."/>
            <person name="Murakawa K."/>
            <person name="Fujimori K."/>
            <person name="Tanai H."/>
            <person name="Kimata M."/>
            <person name="Watanabe M."/>
            <person name="Hiraoka S."/>
            <person name="Chiba Y."/>
            <person name="Ishida S."/>
            <person name="Ono Y."/>
            <person name="Takiguchi S."/>
            <person name="Watanabe S."/>
            <person name="Yosida M."/>
            <person name="Hotuta T."/>
            <person name="Kusano J."/>
            <person name="Kanehori K."/>
            <person name="Takahashi-Fujii A."/>
            <person name="Hara H."/>
            <person name="Tanase T.-O."/>
            <person name="Nomura Y."/>
            <person name="Togiya S."/>
            <person name="Komai F."/>
            <person name="Hara R."/>
            <person name="Takeuchi K."/>
            <person name="Arita M."/>
            <person name="Imose N."/>
            <person name="Musashino K."/>
            <person name="Yuuki H."/>
            <person name="Oshima A."/>
            <person name="Sasaki N."/>
            <person name="Aotsuka S."/>
            <person name="Yoshikawa Y."/>
            <person name="Matsunawa H."/>
            <person name="Ichihara T."/>
            <person name="Shiohata N."/>
            <person name="Sano S."/>
            <person name="Moriya S."/>
            <person name="Momiyama H."/>
            <person name="Satoh N."/>
            <person name="Takami S."/>
            <person name="Terashima Y."/>
            <person name="Suzuki O."/>
            <person name="Nakagawa S."/>
            <person name="Senoh A."/>
            <person name="Mizoguchi H."/>
            <person name="Goto Y."/>
            <person name="Shimizu F."/>
            <person name="Wakebe H."/>
            <person name="Hishigaki H."/>
            <person name="Watanabe T."/>
            <person name="Sugiyama A."/>
            <person name="Takemoto M."/>
            <person name="Kawakami B."/>
            <person name="Yamazaki M."/>
            <person name="Watanabe K."/>
            <person name="Kumagai A."/>
            <person name="Itakura S."/>
            <person name="Fukuzumi Y."/>
            <person name="Fujimori Y."/>
            <person name="Komiyama M."/>
            <person name="Tashiro H."/>
            <person name="Tanigami A."/>
            <person name="Fujiwara T."/>
            <person name="Ono T."/>
            <person name="Yamada K."/>
            <person name="Fujii Y."/>
            <person name="Ozaki K."/>
            <person name="Hirao M."/>
            <person name="Ohmori Y."/>
            <person name="Kawabata A."/>
            <person name="Hikiji T."/>
            <person name="Kobatake N."/>
            <person name="Inagaki H."/>
            <person name="Ikema Y."/>
            <person name="Okamoto S."/>
            <person name="Okitani R."/>
            <person name="Kawakami T."/>
            <person name="Noguchi S."/>
            <person name="Itoh T."/>
            <person name="Shigeta K."/>
            <person name="Senba T."/>
            <person name="Matsumura K."/>
            <person name="Nakajima Y."/>
            <person name="Mizuno T."/>
            <person name="Morinaga M."/>
            <person name="Sasaki M."/>
            <person name="Togashi T."/>
            <person name="Oyama M."/>
            <person name="Hata H."/>
            <person name="Watanabe M."/>
            <person name="Komatsu T."/>
            <person name="Mizushima-Sugano J."/>
            <person name="Satoh T."/>
            <person name="Shirai Y."/>
            <person name="Takahashi Y."/>
            <person name="Nakagawa K."/>
            <person name="Okumura K."/>
            <person name="Nagase T."/>
            <person name="Nomura N."/>
            <person name="Kikuchi H."/>
            <person name="Masuho Y."/>
            <person name="Yamashita R."/>
            <person name="Nakai K."/>
            <person name="Yada T."/>
            <person name="Nakamura Y."/>
            <person name="Ohara O."/>
            <person name="Isogai T."/>
            <person name="Sugano S."/>
        </authorList>
    </citation>
    <scope>NUCLEOTIDE SEQUENCE [LARGE SCALE MRNA] (ISOFORM 1)</scope>
    <source>
        <tissue>Placenta</tissue>
    </source>
</reference>
<reference key="6">
    <citation type="journal article" date="2004" name="Nature">
        <title>The DNA sequence and biology of human chromosome 19.</title>
        <authorList>
            <person name="Grimwood J."/>
            <person name="Gordon L.A."/>
            <person name="Olsen A.S."/>
            <person name="Terry A."/>
            <person name="Schmutz J."/>
            <person name="Lamerdin J.E."/>
            <person name="Hellsten U."/>
            <person name="Goodstein D."/>
            <person name="Couronne O."/>
            <person name="Tran-Gyamfi M."/>
            <person name="Aerts A."/>
            <person name="Altherr M."/>
            <person name="Ashworth L."/>
            <person name="Bajorek E."/>
            <person name="Black S."/>
            <person name="Branscomb E."/>
            <person name="Caenepeel S."/>
            <person name="Carrano A.V."/>
            <person name="Caoile C."/>
            <person name="Chan Y.M."/>
            <person name="Christensen M."/>
            <person name="Cleland C.A."/>
            <person name="Copeland A."/>
            <person name="Dalin E."/>
            <person name="Dehal P."/>
            <person name="Denys M."/>
            <person name="Detter J.C."/>
            <person name="Escobar J."/>
            <person name="Flowers D."/>
            <person name="Fotopulos D."/>
            <person name="Garcia C."/>
            <person name="Georgescu A.M."/>
            <person name="Glavina T."/>
            <person name="Gomez M."/>
            <person name="Gonzales E."/>
            <person name="Groza M."/>
            <person name="Hammon N."/>
            <person name="Hawkins T."/>
            <person name="Haydu L."/>
            <person name="Ho I."/>
            <person name="Huang W."/>
            <person name="Israni S."/>
            <person name="Jett J."/>
            <person name="Kadner K."/>
            <person name="Kimball H."/>
            <person name="Kobayashi A."/>
            <person name="Larionov V."/>
            <person name="Leem S.-H."/>
            <person name="Lopez F."/>
            <person name="Lou Y."/>
            <person name="Lowry S."/>
            <person name="Malfatti S."/>
            <person name="Martinez D."/>
            <person name="McCready P.M."/>
            <person name="Medina C."/>
            <person name="Morgan J."/>
            <person name="Nelson K."/>
            <person name="Nolan M."/>
            <person name="Ovcharenko I."/>
            <person name="Pitluck S."/>
            <person name="Pollard M."/>
            <person name="Popkie A.P."/>
            <person name="Predki P."/>
            <person name="Quan G."/>
            <person name="Ramirez L."/>
            <person name="Rash S."/>
            <person name="Retterer J."/>
            <person name="Rodriguez A."/>
            <person name="Rogers S."/>
            <person name="Salamov A."/>
            <person name="Salazar A."/>
            <person name="She X."/>
            <person name="Smith D."/>
            <person name="Slezak T."/>
            <person name="Solovyev V."/>
            <person name="Thayer N."/>
            <person name="Tice H."/>
            <person name="Tsai M."/>
            <person name="Ustaszewska A."/>
            <person name="Vo N."/>
            <person name="Wagner M."/>
            <person name="Wheeler J."/>
            <person name="Wu K."/>
            <person name="Xie G."/>
            <person name="Yang J."/>
            <person name="Dubchak I."/>
            <person name="Furey T.S."/>
            <person name="DeJong P."/>
            <person name="Dickson M."/>
            <person name="Gordon D."/>
            <person name="Eichler E.E."/>
            <person name="Pennacchio L.A."/>
            <person name="Richardson P."/>
            <person name="Stubbs L."/>
            <person name="Rokhsar D.S."/>
            <person name="Myers R.M."/>
            <person name="Rubin E.M."/>
            <person name="Lucas S.M."/>
        </authorList>
    </citation>
    <scope>NUCLEOTIDE SEQUENCE [LARGE SCALE GENOMIC DNA]</scope>
</reference>
<reference key="7">
    <citation type="submission" date="2005-07" db="EMBL/GenBank/DDBJ databases">
        <authorList>
            <person name="Mural R.J."/>
            <person name="Istrail S."/>
            <person name="Sutton G.G."/>
            <person name="Florea L."/>
            <person name="Halpern A.L."/>
            <person name="Mobarry C.M."/>
            <person name="Lippert R."/>
            <person name="Walenz B."/>
            <person name="Shatkay H."/>
            <person name="Dew I."/>
            <person name="Miller J.R."/>
            <person name="Flanigan M.J."/>
            <person name="Edwards N.J."/>
            <person name="Bolanos R."/>
            <person name="Fasulo D."/>
            <person name="Halldorsson B.V."/>
            <person name="Hannenhalli S."/>
            <person name="Turner R."/>
            <person name="Yooseph S."/>
            <person name="Lu F."/>
            <person name="Nusskern D.R."/>
            <person name="Shue B.C."/>
            <person name="Zheng X.H."/>
            <person name="Zhong F."/>
            <person name="Delcher A.L."/>
            <person name="Huson D.H."/>
            <person name="Kravitz S.A."/>
            <person name="Mouchard L."/>
            <person name="Reinert K."/>
            <person name="Remington K.A."/>
            <person name="Clark A.G."/>
            <person name="Waterman M.S."/>
            <person name="Eichler E.E."/>
            <person name="Adams M.D."/>
            <person name="Hunkapiller M.W."/>
            <person name="Myers E.W."/>
            <person name="Venter J.C."/>
        </authorList>
    </citation>
    <scope>NUCLEOTIDE SEQUENCE [LARGE SCALE GENOMIC DNA]</scope>
</reference>
<reference key="8">
    <citation type="journal article" date="2004" name="Genome Res.">
        <title>The status, quality, and expansion of the NIH full-length cDNA project: the Mammalian Gene Collection (MGC).</title>
        <authorList>
            <consortium name="The MGC Project Team"/>
        </authorList>
    </citation>
    <scope>NUCLEOTIDE SEQUENCE [LARGE SCALE MRNA] (ISOFORM 1)</scope>
    <scope>VARIANTS LEU-4 AND ALA-137</scope>
    <source>
        <tissue>Brain</tissue>
        <tissue>Placenta</tissue>
    </source>
</reference>
<reference key="9">
    <citation type="journal article" date="1981" name="J. Biol. Chem.">
        <title>The amino acid sequences of the prepeptides contained in the alpha and beta subunits of human choriogonadotropin.</title>
        <authorList>
            <person name="Birken S."/>
            <person name="Fetherston J."/>
            <person name="Canfield R.E."/>
            <person name="Boime I."/>
        </authorList>
    </citation>
    <scope>PROTEIN SEQUENCE OF 1-20 (PRECURSOR PROTEIN)</scope>
</reference>
<reference key="10">
    <citation type="journal article" date="1986" name="J. Biol. Chem.">
        <title>A map of the hCG beta-LH beta gene cluster.</title>
        <authorList>
            <person name="Policastro P.F."/>
            <person name="Daniels-Mcqueen S."/>
            <person name="Carle G."/>
            <person name="Boime I."/>
        </authorList>
    </citation>
    <scope>NUCLEOTIDE SEQUENCE [GENOMIC DNA] OF 1-5</scope>
</reference>
<reference key="11">
    <citation type="journal article" date="2002" name="Mol. Biol. Evol.">
        <title>Chorionic gonadotropin has a recent origin within primates and an evolutionary history of selection.</title>
        <authorList>
            <person name="Maston G.A."/>
            <person name="Ruvolo M."/>
        </authorList>
    </citation>
    <scope>NUCLEOTIDE SEQUENCE [GENOMIC DNA] OF 6-164</scope>
    <scope>VARIANTS ALA-18; ARG-22; MET-24; TRP-28; HIS-30; ILE-35; ALA-137 AND CYS-147</scope>
    <scope>MISCELLANEOUS</scope>
</reference>
<reference key="12">
    <citation type="journal article" date="1975" name="J. Biol. Chem.">
        <title>The amino acid sequence of human chorionic gonadotropin. The alpha subunit and beta subunit.</title>
        <authorList>
            <person name="Morgan F.J."/>
            <person name="Birken S."/>
            <person name="Canfield R.E."/>
        </authorList>
    </citation>
    <scope>PROTEIN SEQUENCE OF 21-165</scope>
</reference>
<reference key="13">
    <citation type="journal article" date="1973" name="J. Biol. Chem.">
        <title>Human chorionic gonadotropin. Linear amino acid sequence of the beta subunit.</title>
        <authorList>
            <person name="Carlsen R.B."/>
            <person name="Bahl O.P."/>
            <person name="Swaminathan N."/>
        </authorList>
    </citation>
    <scope>PRELIMINARY PROTEIN SEQUENCE OF 21-165</scope>
</reference>
<reference key="14">
    <citation type="journal article" date="1981" name="J. Biol. Chem.">
        <title>Assignment of disulfide bonds in the beta subunit of human chorionic gonadotropin.</title>
        <authorList>
            <person name="Mise T."/>
            <person name="Bahl O.P."/>
        </authorList>
    </citation>
    <scope>PRELIMINARY ASSIGNMENT OF DISULFIDE BONDS</scope>
</reference>
<reference key="15">
    <citation type="journal article" date="1990" name="J. Biol. Chem.">
        <title>Role of disulfide bond formation in the folding of human chorionic gonadotropin beta subunit into an alpha beta dimer assembly-competent form.</title>
        <authorList>
            <person name="Saccuzo Beebe J."/>
            <person name="Mountjoy K."/>
            <person name="Krzesicki R.F."/>
            <person name="Perini F."/>
            <person name="Ruddon R.W."/>
        </authorList>
    </citation>
    <scope>DISULFIDE BONDS</scope>
</reference>
<reference key="16">
    <citation type="journal article" date="1991" name="Glycobiology">
        <title>Site-specific N-glycosylation of human chorionic gonadotrophin -- structural analysis of glycopeptides by one- and two-dimensional 1H NMR spectroscopy.</title>
        <authorList>
            <person name="Weisshaar G."/>
            <person name="Hiyama J."/>
            <person name="Renwick A.G.C."/>
        </authorList>
    </citation>
    <scope>STRUCTURE OF CARBOHYDRATES</scope>
</reference>
<reference key="17">
    <citation type="journal article" date="1994" name="Nature">
        <title>Crystal structure of human chorionic gonadotropin.</title>
        <authorList>
            <person name="Lapthorn A.J."/>
            <person name="Harris D.C."/>
            <person name="Littlejohn A."/>
            <person name="Lustbader J.W."/>
            <person name="Canfield R.E."/>
            <person name="Machin K.J."/>
            <person name="Morgan F.J."/>
            <person name="Isaacs N.W."/>
        </authorList>
    </citation>
    <scope>X-RAY CRYSTALLOGRAPHY (3.0 ANGSTROMS)</scope>
    <scope>GLYCOSYLATION AT ASN-33 AND ASN-50</scope>
    <scope>SUBUNIT</scope>
</reference>
<reference key="18">
    <citation type="journal article" date="2005" name="Hum. Reprod.">
        <title>Expression of beta-subunit of HCG genes during normal and failed pregnancy.</title>
        <authorList>
            <person name="Rull K."/>
            <person name="Laan M."/>
        </authorList>
    </citation>
    <scope>TISSUE SPECIFICITY</scope>
    <scope>DEVELOPMENTAL STAGE</scope>
</reference>
<proteinExistence type="evidence at protein level"/>
<feature type="signal peptide" evidence="2 9">
    <location>
        <begin position="1"/>
        <end position="20"/>
    </location>
</feature>
<feature type="chain" id="PRO_0000011676" description="Choriogonadotropin subunit beta 3">
    <location>
        <begin position="21"/>
        <end position="165"/>
    </location>
</feature>
<feature type="region of interest" description="Disordered" evidence="1">
    <location>
        <begin position="131"/>
        <end position="165"/>
    </location>
</feature>
<feature type="compositionally biased region" description="Pro residues" evidence="1">
    <location>
        <begin position="143"/>
        <end position="154"/>
    </location>
</feature>
<feature type="glycosylation site" id="CAR_000042" description="N-linked (GlcNAc...) asparagine" evidence="12">
    <location>
        <position position="33"/>
    </location>
</feature>
<feature type="glycosylation site" id="CAR_000043" description="N-linked (GlcNAc...) asparagine" evidence="12">
    <location>
        <position position="50"/>
    </location>
</feature>
<feature type="glycosylation site" description="O-linked (GalNAc...) serine" evidence="2">
    <location>
        <position position="141"/>
    </location>
</feature>
<feature type="glycosylation site" description="O-linked (GalNAc...) serine" evidence="2">
    <location>
        <position position="147"/>
    </location>
</feature>
<feature type="glycosylation site" description="O-linked (GalNAc...) serine" evidence="2">
    <location>
        <position position="152"/>
    </location>
</feature>
<feature type="glycosylation site" description="O-linked (GalNAc...) serine" evidence="2">
    <location>
        <position position="158"/>
    </location>
</feature>
<feature type="disulfide bond" evidence="6 10">
    <location>
        <begin position="29"/>
        <end position="77"/>
    </location>
</feature>
<feature type="disulfide bond" evidence="6 10">
    <location>
        <begin position="43"/>
        <end position="92"/>
    </location>
</feature>
<feature type="disulfide bond" evidence="6 10">
    <location>
        <begin position="46"/>
        <end position="130"/>
    </location>
</feature>
<feature type="disulfide bond" evidence="6 10">
    <location>
        <begin position="54"/>
        <end position="108"/>
    </location>
</feature>
<feature type="disulfide bond" evidence="6 10">
    <location>
        <begin position="58"/>
        <end position="110"/>
    </location>
</feature>
<feature type="disulfide bond" evidence="6 10">
    <location>
        <begin position="113"/>
        <end position="120"/>
    </location>
</feature>
<feature type="splice variant" id="VSP_038396" description="In isoform 2." evidence="11">
    <original>MEMF</original>
    <variation>MGRPGLGAAVSDPGEAVSLS</variation>
    <location>
        <begin position="1"/>
        <end position="4"/>
    </location>
</feature>
<feature type="sequence variant" id="VAR_014585" description="In dbSNP:rs767100833 and dbSNP:rs371475564." evidence="4">
    <original>F</original>
    <variation>L</variation>
    <location>
        <position position="4"/>
    </location>
</feature>
<feature type="sequence variant" id="VAR_015231" description="In dbSNP:rs201240617." evidence="3">
    <original>T</original>
    <variation>A</variation>
    <location>
        <position position="18"/>
    </location>
</feature>
<feature type="sequence variant" id="VAR_014586" description="In dbSNP:rs201575305 and dbSNP:rs199720009." evidence="3">
    <original>K</original>
    <variation>R</variation>
    <location>
        <position position="22"/>
    </location>
</feature>
<feature type="sequence variant" id="VAR_015232" description="Requires 2 nucleotide substitutions." evidence="3 7">
    <original>P</original>
    <variation>M</variation>
    <location>
        <position position="24"/>
    </location>
</feature>
<feature type="sequence variant" id="VAR_015233" description="In dbSNP:rs1261895475." evidence="3">
    <original>R</original>
    <variation>W</variation>
    <location>
        <position position="28"/>
    </location>
</feature>
<feature type="sequence variant" id="VAR_015234" description="In dbSNP:rs201373221." evidence="3">
    <original>R</original>
    <variation>H</variation>
    <location>
        <position position="30"/>
    </location>
</feature>
<feature type="sequence variant" id="VAR_014587" description="In dbSNP:rs201780746 and dbSNP:rs199824672." evidence="3">
    <original>T</original>
    <variation>I</variation>
    <location>
        <position position="35"/>
    </location>
</feature>
<feature type="sequence variant" id="VAR_003188" description="In dbSNP:rs200199557 and dbSNP:rs199614255." evidence="3 4 7 8">
    <original>D</original>
    <variation>A</variation>
    <location>
        <position position="137"/>
    </location>
</feature>
<feature type="sequence variant" id="VAR_015235" evidence="3">
    <original>S</original>
    <variation>C</variation>
    <location>
        <position position="147"/>
    </location>
</feature>
<feature type="sequence conflict" description="In Ref. 11; AAL69709." evidence="11" ref="11">
    <original>P</original>
    <variation>T</variation>
    <location>
        <position position="123"/>
    </location>
</feature>
<feature type="strand" evidence="13">
    <location>
        <begin position="25"/>
        <end position="38"/>
    </location>
</feature>
<feature type="strand" evidence="13">
    <location>
        <begin position="47"/>
        <end position="60"/>
    </location>
</feature>
<feature type="strand" evidence="14">
    <location>
        <begin position="67"/>
        <end position="69"/>
    </location>
</feature>
<feature type="strand" evidence="13">
    <location>
        <begin position="75"/>
        <end position="88"/>
    </location>
</feature>
<feature type="strand" evidence="13">
    <location>
        <begin position="99"/>
        <end position="112"/>
    </location>
</feature>
<feature type="turn" evidence="13">
    <location>
        <begin position="115"/>
        <end position="117"/>
    </location>
</feature>
<feature type="strand" evidence="13">
    <location>
        <begin position="118"/>
        <end position="121"/>
    </location>
</feature>
<feature type="sequence conflict" description="In Ref. 2; CAA25069." evidence="11" ref="2">
    <original>G</original>
    <variation>R</variation>
    <location sequence="P0DN86-2">
        <position position="7"/>
    </location>
</feature>
<feature type="sequence conflict" description="In Ref. 2; CAA25069." evidence="11" ref="2">
    <original>A</original>
    <variation>V</variation>
    <location sequence="P0DN86-2">
        <position position="9"/>
    </location>
</feature>
<feature type="sequence conflict" description="In Ref. 2; CAA25069." evidence="11" ref="2">
    <original>D</original>
    <variation>G</variation>
    <location sequence="P0DN86-2">
        <position position="12"/>
    </location>
</feature>
<keyword id="KW-0002">3D-structure</keyword>
<keyword id="KW-0025">Alternative splicing</keyword>
<keyword id="KW-0903">Direct protein sequencing</keyword>
<keyword id="KW-1015">Disulfide bond</keyword>
<keyword id="KW-0325">Glycoprotein</keyword>
<keyword id="KW-0372">Hormone</keyword>
<keyword id="KW-0582">Pharmaceutical</keyword>
<keyword id="KW-1267">Proteomics identification</keyword>
<keyword id="KW-1185">Reference proteome</keyword>
<keyword id="KW-0964">Secreted</keyword>
<keyword id="KW-0732">Signal</keyword>